<reference key="1">
    <citation type="journal article" date="2004" name="Nat. Genet.">
        <title>Complete sequencing and characterization of 21,243 full-length human cDNAs.</title>
        <authorList>
            <person name="Ota T."/>
            <person name="Suzuki Y."/>
            <person name="Nishikawa T."/>
            <person name="Otsuki T."/>
            <person name="Sugiyama T."/>
            <person name="Irie R."/>
            <person name="Wakamatsu A."/>
            <person name="Hayashi K."/>
            <person name="Sato H."/>
            <person name="Nagai K."/>
            <person name="Kimura K."/>
            <person name="Makita H."/>
            <person name="Sekine M."/>
            <person name="Obayashi M."/>
            <person name="Nishi T."/>
            <person name="Shibahara T."/>
            <person name="Tanaka T."/>
            <person name="Ishii S."/>
            <person name="Yamamoto J."/>
            <person name="Saito K."/>
            <person name="Kawai Y."/>
            <person name="Isono Y."/>
            <person name="Nakamura Y."/>
            <person name="Nagahari K."/>
            <person name="Murakami K."/>
            <person name="Yasuda T."/>
            <person name="Iwayanagi T."/>
            <person name="Wagatsuma M."/>
            <person name="Shiratori A."/>
            <person name="Sudo H."/>
            <person name="Hosoiri T."/>
            <person name="Kaku Y."/>
            <person name="Kodaira H."/>
            <person name="Kondo H."/>
            <person name="Sugawara M."/>
            <person name="Takahashi M."/>
            <person name="Kanda K."/>
            <person name="Yokoi T."/>
            <person name="Furuya T."/>
            <person name="Kikkawa E."/>
            <person name="Omura Y."/>
            <person name="Abe K."/>
            <person name="Kamihara K."/>
            <person name="Katsuta N."/>
            <person name="Sato K."/>
            <person name="Tanikawa M."/>
            <person name="Yamazaki M."/>
            <person name="Ninomiya K."/>
            <person name="Ishibashi T."/>
            <person name="Yamashita H."/>
            <person name="Murakawa K."/>
            <person name="Fujimori K."/>
            <person name="Tanai H."/>
            <person name="Kimata M."/>
            <person name="Watanabe M."/>
            <person name="Hiraoka S."/>
            <person name="Chiba Y."/>
            <person name="Ishida S."/>
            <person name="Ono Y."/>
            <person name="Takiguchi S."/>
            <person name="Watanabe S."/>
            <person name="Yosida M."/>
            <person name="Hotuta T."/>
            <person name="Kusano J."/>
            <person name="Kanehori K."/>
            <person name="Takahashi-Fujii A."/>
            <person name="Hara H."/>
            <person name="Tanase T.-O."/>
            <person name="Nomura Y."/>
            <person name="Togiya S."/>
            <person name="Komai F."/>
            <person name="Hara R."/>
            <person name="Takeuchi K."/>
            <person name="Arita M."/>
            <person name="Imose N."/>
            <person name="Musashino K."/>
            <person name="Yuuki H."/>
            <person name="Oshima A."/>
            <person name="Sasaki N."/>
            <person name="Aotsuka S."/>
            <person name="Yoshikawa Y."/>
            <person name="Matsunawa H."/>
            <person name="Ichihara T."/>
            <person name="Shiohata N."/>
            <person name="Sano S."/>
            <person name="Moriya S."/>
            <person name="Momiyama H."/>
            <person name="Satoh N."/>
            <person name="Takami S."/>
            <person name="Terashima Y."/>
            <person name="Suzuki O."/>
            <person name="Nakagawa S."/>
            <person name="Senoh A."/>
            <person name="Mizoguchi H."/>
            <person name="Goto Y."/>
            <person name="Shimizu F."/>
            <person name="Wakebe H."/>
            <person name="Hishigaki H."/>
            <person name="Watanabe T."/>
            <person name="Sugiyama A."/>
            <person name="Takemoto M."/>
            <person name="Kawakami B."/>
            <person name="Yamazaki M."/>
            <person name="Watanabe K."/>
            <person name="Kumagai A."/>
            <person name="Itakura S."/>
            <person name="Fukuzumi Y."/>
            <person name="Fujimori Y."/>
            <person name="Komiyama M."/>
            <person name="Tashiro H."/>
            <person name="Tanigami A."/>
            <person name="Fujiwara T."/>
            <person name="Ono T."/>
            <person name="Yamada K."/>
            <person name="Fujii Y."/>
            <person name="Ozaki K."/>
            <person name="Hirao M."/>
            <person name="Ohmori Y."/>
            <person name="Kawabata A."/>
            <person name="Hikiji T."/>
            <person name="Kobatake N."/>
            <person name="Inagaki H."/>
            <person name="Ikema Y."/>
            <person name="Okamoto S."/>
            <person name="Okitani R."/>
            <person name="Kawakami T."/>
            <person name="Noguchi S."/>
            <person name="Itoh T."/>
            <person name="Shigeta K."/>
            <person name="Senba T."/>
            <person name="Matsumura K."/>
            <person name="Nakajima Y."/>
            <person name="Mizuno T."/>
            <person name="Morinaga M."/>
            <person name="Sasaki M."/>
            <person name="Togashi T."/>
            <person name="Oyama M."/>
            <person name="Hata H."/>
            <person name="Watanabe M."/>
            <person name="Komatsu T."/>
            <person name="Mizushima-Sugano J."/>
            <person name="Satoh T."/>
            <person name="Shirai Y."/>
            <person name="Takahashi Y."/>
            <person name="Nakagawa K."/>
            <person name="Okumura K."/>
            <person name="Nagase T."/>
            <person name="Nomura N."/>
            <person name="Kikuchi H."/>
            <person name="Masuho Y."/>
            <person name="Yamashita R."/>
            <person name="Nakai K."/>
            <person name="Yada T."/>
            <person name="Nakamura Y."/>
            <person name="Ohara O."/>
            <person name="Isogai T."/>
            <person name="Sugano S."/>
        </authorList>
    </citation>
    <scope>NUCLEOTIDE SEQUENCE [LARGE SCALE MRNA]</scope>
    <source>
        <tissue>Placenta</tissue>
        <tissue>Subthalamic nucleus</tissue>
    </source>
</reference>
<reference key="2">
    <citation type="submission" date="2004-06" db="EMBL/GenBank/DDBJ databases">
        <title>Cloning of human full open reading frames in Gateway(TM) system entry vector (pDONR201).</title>
        <authorList>
            <person name="Ebert L."/>
            <person name="Schick M."/>
            <person name="Neubert P."/>
            <person name="Schatten R."/>
            <person name="Henze S."/>
            <person name="Korn B."/>
        </authorList>
    </citation>
    <scope>NUCLEOTIDE SEQUENCE [LARGE SCALE MRNA]</scope>
</reference>
<reference key="3">
    <citation type="submission" date="2005-09" db="EMBL/GenBank/DDBJ databases">
        <authorList>
            <person name="Mural R.J."/>
            <person name="Istrail S."/>
            <person name="Sutton G.G."/>
            <person name="Florea L."/>
            <person name="Halpern A.L."/>
            <person name="Mobarry C.M."/>
            <person name="Lippert R."/>
            <person name="Walenz B."/>
            <person name="Shatkay H."/>
            <person name="Dew I."/>
            <person name="Miller J.R."/>
            <person name="Flanigan M.J."/>
            <person name="Edwards N.J."/>
            <person name="Bolanos R."/>
            <person name="Fasulo D."/>
            <person name="Halldorsson B.V."/>
            <person name="Hannenhalli S."/>
            <person name="Turner R."/>
            <person name="Yooseph S."/>
            <person name="Lu F."/>
            <person name="Nusskern D.R."/>
            <person name="Shue B.C."/>
            <person name="Zheng X.H."/>
            <person name="Zhong F."/>
            <person name="Delcher A.L."/>
            <person name="Huson D.H."/>
            <person name="Kravitz S.A."/>
            <person name="Mouchard L."/>
            <person name="Reinert K."/>
            <person name="Remington K.A."/>
            <person name="Clark A.G."/>
            <person name="Waterman M.S."/>
            <person name="Eichler E.E."/>
            <person name="Adams M.D."/>
            <person name="Hunkapiller M.W."/>
            <person name="Myers E.W."/>
            <person name="Venter J.C."/>
        </authorList>
    </citation>
    <scope>NUCLEOTIDE SEQUENCE [LARGE SCALE GENOMIC DNA]</scope>
</reference>
<reference key="4">
    <citation type="journal article" date="2004" name="Genome Res.">
        <title>The status, quality, and expansion of the NIH full-length cDNA project: the Mammalian Gene Collection (MGC).</title>
        <authorList>
            <consortium name="The MGC Project Team"/>
        </authorList>
    </citation>
    <scope>NUCLEOTIDE SEQUENCE [LARGE SCALE MRNA]</scope>
    <source>
        <tissue>Skin</tissue>
    </source>
</reference>
<dbReference type="EMBL" id="AK002149">
    <property type="protein sequence ID" value="BAA92110.1"/>
    <property type="molecule type" value="mRNA"/>
</dbReference>
<dbReference type="EMBL" id="AK315186">
    <property type="protein sequence ID" value="BAG37626.1"/>
    <property type="molecule type" value="mRNA"/>
</dbReference>
<dbReference type="EMBL" id="CR457279">
    <property type="protein sequence ID" value="CAG33560.1"/>
    <property type="molecule type" value="mRNA"/>
</dbReference>
<dbReference type="EMBL" id="CH471052">
    <property type="protein sequence ID" value="EAW79485.1"/>
    <property type="molecule type" value="Genomic_DNA"/>
</dbReference>
<dbReference type="EMBL" id="BC043494">
    <property type="protein sequence ID" value="AAH43494.1"/>
    <property type="molecule type" value="mRNA"/>
</dbReference>
<dbReference type="CCDS" id="CCDS3012.1"/>
<dbReference type="RefSeq" id="NP_061942.2">
    <property type="nucleotide sequence ID" value="NM_019069.3"/>
</dbReference>
<dbReference type="SMR" id="Q86VZ2"/>
<dbReference type="BioGRID" id="120039">
    <property type="interactions" value="63"/>
</dbReference>
<dbReference type="CORUM" id="Q86VZ2"/>
<dbReference type="FunCoup" id="Q86VZ2">
    <property type="interactions" value="473"/>
</dbReference>
<dbReference type="IntAct" id="Q86VZ2">
    <property type="interactions" value="46"/>
</dbReference>
<dbReference type="MINT" id="Q86VZ2"/>
<dbReference type="STRING" id="9606.ENSP00000330381"/>
<dbReference type="iPTMnet" id="Q86VZ2"/>
<dbReference type="PhosphoSitePlus" id="Q86VZ2"/>
<dbReference type="BioMuta" id="WDR5B"/>
<dbReference type="DMDM" id="74762455"/>
<dbReference type="jPOST" id="Q86VZ2"/>
<dbReference type="MassIVE" id="Q86VZ2"/>
<dbReference type="PaxDb" id="9606-ENSP00000330381"/>
<dbReference type="PeptideAtlas" id="Q86VZ2"/>
<dbReference type="ProteomicsDB" id="70093"/>
<dbReference type="Pumba" id="Q86VZ2"/>
<dbReference type="Antibodypedia" id="51262">
    <property type="antibodies" value="74 antibodies from 17 providers"/>
</dbReference>
<dbReference type="DNASU" id="54554"/>
<dbReference type="Ensembl" id="ENST00000330689.6">
    <property type="protein sequence ID" value="ENSP00000330381.4"/>
    <property type="gene ID" value="ENSG00000196981.4"/>
</dbReference>
<dbReference type="GeneID" id="54554"/>
<dbReference type="KEGG" id="hsa:54554"/>
<dbReference type="MANE-Select" id="ENST00000330689.6">
    <property type="protein sequence ID" value="ENSP00000330381.4"/>
    <property type="RefSeq nucleotide sequence ID" value="NM_019069.4"/>
    <property type="RefSeq protein sequence ID" value="NP_061942.2"/>
</dbReference>
<dbReference type="UCSC" id="uc003efa.2">
    <property type="organism name" value="human"/>
</dbReference>
<dbReference type="AGR" id="HGNC:17826"/>
<dbReference type="CTD" id="54554"/>
<dbReference type="GeneCards" id="WDR5B"/>
<dbReference type="HGNC" id="HGNC:17826">
    <property type="gene designation" value="WDR5B"/>
</dbReference>
<dbReference type="HPA" id="ENSG00000196981">
    <property type="expression patterns" value="Low tissue specificity"/>
</dbReference>
<dbReference type="neXtProt" id="NX_Q86VZ2"/>
<dbReference type="OpenTargets" id="ENSG00000196981"/>
<dbReference type="PharmGKB" id="PA38248"/>
<dbReference type="VEuPathDB" id="HostDB:ENSG00000196981"/>
<dbReference type="eggNOG" id="KOG0266">
    <property type="taxonomic scope" value="Eukaryota"/>
</dbReference>
<dbReference type="GeneTree" id="ENSGT00940000154143"/>
<dbReference type="HOGENOM" id="CLU_000288_57_1_1"/>
<dbReference type="InParanoid" id="Q86VZ2"/>
<dbReference type="OMA" id="NYALKCT"/>
<dbReference type="OrthoDB" id="674604at2759"/>
<dbReference type="PAN-GO" id="Q86VZ2">
    <property type="GO annotations" value="3 GO annotations based on evolutionary models"/>
</dbReference>
<dbReference type="PhylomeDB" id="Q86VZ2"/>
<dbReference type="TreeFam" id="TF314125"/>
<dbReference type="PathwayCommons" id="Q86VZ2"/>
<dbReference type="SignaLink" id="Q86VZ2"/>
<dbReference type="BioGRID-ORCS" id="54554">
    <property type="hits" value="10 hits in 1155 CRISPR screens"/>
</dbReference>
<dbReference type="GenomeRNAi" id="54554"/>
<dbReference type="Pharos" id="Q86VZ2">
    <property type="development level" value="Tdark"/>
</dbReference>
<dbReference type="PRO" id="PR:Q86VZ2"/>
<dbReference type="Proteomes" id="UP000005640">
    <property type="component" value="Chromosome 3"/>
</dbReference>
<dbReference type="RNAct" id="Q86VZ2">
    <property type="molecule type" value="protein"/>
</dbReference>
<dbReference type="Bgee" id="ENSG00000196981">
    <property type="expression patterns" value="Expressed in bronchial epithelial cell and 147 other cell types or tissues"/>
</dbReference>
<dbReference type="GO" id="GO:0048188">
    <property type="term" value="C:Set1C/COMPASS complex"/>
    <property type="evidence" value="ECO:0000318"/>
    <property type="project" value="GO_Central"/>
</dbReference>
<dbReference type="GO" id="GO:0042393">
    <property type="term" value="F:histone binding"/>
    <property type="evidence" value="ECO:0000318"/>
    <property type="project" value="GO_Central"/>
</dbReference>
<dbReference type="CDD" id="cd00200">
    <property type="entry name" value="WD40"/>
    <property type="match status" value="1"/>
</dbReference>
<dbReference type="FunFam" id="2.130.10.10:FF:000029">
    <property type="entry name" value="WD repeat-containing protein 5"/>
    <property type="match status" value="1"/>
</dbReference>
<dbReference type="Gene3D" id="2.130.10.10">
    <property type="entry name" value="YVTN repeat-like/Quinoprotein amine dehydrogenase"/>
    <property type="match status" value="1"/>
</dbReference>
<dbReference type="InterPro" id="IPR020472">
    <property type="entry name" value="G-protein_beta_WD-40_rep"/>
</dbReference>
<dbReference type="InterPro" id="IPR015943">
    <property type="entry name" value="WD40/YVTN_repeat-like_dom_sf"/>
</dbReference>
<dbReference type="InterPro" id="IPR019775">
    <property type="entry name" value="WD40_repeat_CS"/>
</dbReference>
<dbReference type="InterPro" id="IPR036322">
    <property type="entry name" value="WD40_repeat_dom_sf"/>
</dbReference>
<dbReference type="InterPro" id="IPR001680">
    <property type="entry name" value="WD40_rpt"/>
</dbReference>
<dbReference type="PANTHER" id="PTHR19879">
    <property type="entry name" value="TRANSCRIPTION INITIATION FACTOR TFIID"/>
    <property type="match status" value="1"/>
</dbReference>
<dbReference type="PANTHER" id="PTHR19879:SF9">
    <property type="entry name" value="TRANSCRIPTION INITIATION FACTOR TFIID SUBUNIT 5"/>
    <property type="match status" value="1"/>
</dbReference>
<dbReference type="Pfam" id="PF25175">
    <property type="entry name" value="Beta-prop_WDR5"/>
    <property type="match status" value="1"/>
</dbReference>
<dbReference type="PIRSF" id="PIRSF002394">
    <property type="entry name" value="GN-bd_beta"/>
    <property type="match status" value="1"/>
</dbReference>
<dbReference type="PRINTS" id="PR00320">
    <property type="entry name" value="GPROTEINBRPT"/>
</dbReference>
<dbReference type="SMART" id="SM00320">
    <property type="entry name" value="WD40"/>
    <property type="match status" value="7"/>
</dbReference>
<dbReference type="SUPFAM" id="SSF50978">
    <property type="entry name" value="WD40 repeat-like"/>
    <property type="match status" value="1"/>
</dbReference>
<dbReference type="PROSITE" id="PS00678">
    <property type="entry name" value="WD_REPEATS_1"/>
    <property type="match status" value="4"/>
</dbReference>
<dbReference type="PROSITE" id="PS50082">
    <property type="entry name" value="WD_REPEATS_2"/>
    <property type="match status" value="6"/>
</dbReference>
<dbReference type="PROSITE" id="PS50294">
    <property type="entry name" value="WD_REPEATS_REGION"/>
    <property type="match status" value="1"/>
</dbReference>
<keyword id="KW-1267">Proteomics identification</keyword>
<keyword id="KW-1185">Reference proteome</keyword>
<keyword id="KW-0677">Repeat</keyword>
<keyword id="KW-0833">Ubl conjugation pathway</keyword>
<keyword id="KW-0853">WD repeat</keyword>
<protein>
    <recommendedName>
        <fullName>WD repeat-containing protein 5B</fullName>
    </recommendedName>
</protein>
<evidence type="ECO:0000250" key="1"/>
<evidence type="ECO:0000256" key="2">
    <source>
        <dbReference type="SAM" id="MobiDB-lite"/>
    </source>
</evidence>
<evidence type="ECO:0000305" key="3"/>
<proteinExistence type="evidence at protein level"/>
<organism>
    <name type="scientific">Homo sapiens</name>
    <name type="common">Human</name>
    <dbReference type="NCBI Taxonomy" id="9606"/>
    <lineage>
        <taxon>Eukaryota</taxon>
        <taxon>Metazoa</taxon>
        <taxon>Chordata</taxon>
        <taxon>Craniata</taxon>
        <taxon>Vertebrata</taxon>
        <taxon>Euteleostomi</taxon>
        <taxon>Mammalia</taxon>
        <taxon>Eutheria</taxon>
        <taxon>Euarchontoglires</taxon>
        <taxon>Primates</taxon>
        <taxon>Haplorrhini</taxon>
        <taxon>Catarrhini</taxon>
        <taxon>Hominidae</taxon>
        <taxon>Homo</taxon>
    </lineage>
</organism>
<name>WDR5B_HUMAN</name>
<gene>
    <name type="primary">WDR5B</name>
</gene>
<accession>Q86VZ2</accession>
<accession>B2RCM9</accession>
<accession>Q9NUL4</accession>
<comment type="function">
    <text evidence="1">May function as a substrate receptor for CUL4-DDB1 ubiquitin E3 ligase complex.</text>
</comment>
<comment type="subunit">
    <text evidence="1">Probable part of a cullin-RING E3 protein ligase complex containing CUL4B-DDB1 and a substrate-recruiting component (DCAF). Interacts with CUL4B and DDB1 (By similarity).</text>
</comment>
<comment type="similarity">
    <text evidence="3">Belongs to the WD repeat WDR5/wds family.</text>
</comment>
<feature type="chain" id="PRO_0000278461" description="WD repeat-containing protein 5B">
    <location>
        <begin position="1"/>
        <end position="330"/>
    </location>
</feature>
<feature type="repeat" description="WD 1">
    <location>
        <begin position="39"/>
        <end position="78"/>
    </location>
</feature>
<feature type="repeat" description="WD 2">
    <location>
        <begin position="81"/>
        <end position="122"/>
    </location>
</feature>
<feature type="repeat" description="WD 3">
    <location>
        <begin position="124"/>
        <end position="164"/>
    </location>
</feature>
<feature type="repeat" description="WD 4">
    <location>
        <begin position="165"/>
        <end position="204"/>
    </location>
</feature>
<feature type="repeat" description="WD 5">
    <location>
        <begin position="208"/>
        <end position="249"/>
    </location>
</feature>
<feature type="repeat" description="WD 6">
    <location>
        <begin position="252"/>
        <end position="292"/>
    </location>
</feature>
<feature type="repeat" description="WD 7">
    <location>
        <begin position="295"/>
        <end position="330"/>
    </location>
</feature>
<feature type="region of interest" description="Disordered" evidence="2">
    <location>
        <begin position="1"/>
        <end position="26"/>
    </location>
</feature>
<feature type="short sequence motif" description="DDB1-binding motif">
    <location>
        <begin position="188"/>
        <end position="192"/>
    </location>
</feature>
<feature type="compositionally biased region" description="Basic and acidic residues" evidence="2">
    <location>
        <begin position="1"/>
        <end position="10"/>
    </location>
</feature>
<feature type="compositionally biased region" description="Low complexity" evidence="2">
    <location>
        <begin position="11"/>
        <end position="23"/>
    </location>
</feature>
<feature type="sequence conflict" description="In Ref. 1; BAA92110." evidence="3" ref="1">
    <original>H</original>
    <variation>Q</variation>
    <location>
        <position position="251"/>
    </location>
</feature>
<sequence>MATKESRDAKAQLALSSSANQSKEVPENPNYALKCTLVGHTEAVSSVKFSPNGEWLASSSADRLIIIWGAYDGKYEKTLYGHNLEISDVAWSSDSSRLVSASDDKTLKLWDVRSGKCLKTLKGHSNYVFCCNFNPPSNLIISGSFDETVKIWEVKTGKCLKTLSAHSDPVSAVHFNCSGSLIVSGSYDGLCRIWDAASGQCLKTLVDDDNPPVSFVKFSPNGKYILTATLDNTLKLWDYSRGRCLKTYTGHKNEKYCIFANFSVTGGKWIVSGSEDNLVYIWNLQTKEIVQKLQGHTDVVISAACHPTENLIASAALENDKTIKLWMSNH</sequence>